<accession>H6WS94</accession>
<gene>
    <name evidence="7" type="primary">PDR1</name>
</gene>
<sequence>MEGGEELFRVSSARLSSSNVWRNSAMDVFSRSSREADDEEALKWAALEKLPTYLRIRRGILTEEEGQSREVDITKLDLVERRNLLERLIKITDEDNEKFLLKLKERIDRVGLDLPTIEVRFEHLSVDAEARVGSRALPTVFNFTVNILEDFLNYLHILPNRKQPLPILHDVSGIIKPGRMTLLLGPPSSGKTTLLLALAGKLDKDLKVSGRVTYNGHDMNEFVAQRSSAYISQYDLHIGEMTVRETLAFSARCQGVGAKYEILAELSRREKEANIKPDPDVDIFMKAAWNEGQEANVVTDYTLKILGLEICADTIVGDEMVRGISGGQRKRLTTGEMMVGPARALFMDEISTGLDSSTTYQIVNSIRQSIHILQGTAVISLLQPAPETYDLFDDIILLSDGQIVYQGPRENVLEFFEYMGFICPERKGVADFLQEVTSRKDQEQYWARREESYKFITVREFSEAFQAFHIGRKLGDELAVPFDKSKSHPAALTTKRYGVSKKELLKACTAREYLLMKRNSFVYIFKMIQLTLMASITMTLFLPTEMHRNTTIDGAVFLGALFYALIMIMFNGFSELALSIMKLPSFYKHRDLLFFPPWAYALPTWILKIPITLVEVAIWVCMTYYVIGFEADVGRFFKQLLLLICVNQMASGLFRLMGALGRNIIVANTFGSFVLLTVLVMGGFVLSRDDVKKWWIWGYWISPMMYAQNAIAVNEFLGKSWAHVPPNSTSTETLGVSFLKSRGIFPDARWYWIGAGALIGYVFLFNFLFAVALAYLNPFGKPQAVLSEETVAERNASKRGEVIELSSLGKSSSEKGNDVRRSASSRSMSSRVGSITAADLSKRRGMILPFEPLSITFDDIRYAVDMPQEMKAQGFTEDRLELLRGVSGAFRPGVLTALMGVSGAGKTTLMDVLAGRKTGGYIDGTISISGYPKQQETFARIAGYCEQTDIHSPHVTVYESLQFSAWLRLPREVDTATRKMFIEEVMELIELIPLRDALVGLPGVNGLSTEQRKRLTVAVELVANPSIIFMDEPTSGLDARAAAIVMRTVRNTVDTGRTVVCTIHQPSIDIFDAFDELLLLKRGGEEIYVGPLGRQSSHLIKYFEGIDGVPKIKDGYNPATWMLEITSVAQEGALGNDFTELYKNSELYRRNKALIKELSVPASCSKDLYFPTKYSQSFFTQCMACFWKQHWSYWRNPPYTAVRIMFTFFIALMFGTIFWDLGSRRERQQDLLNAIGSMYIAVLFLGVQNATTVQPVIAIERTVFYRERAAGMYSAMPYAFGQVMIELPYLFLQTIIYGVIVYAMIGFEWTVAKFFWYLFFMYFTLLYFTLYGMMTVAVTPNQSIAAIISSAFYAVWNLFCGFIVPKTRMPVWWRWYYYICPISWTLYGLIASQFGDIQDRLDTNETVEQFIENFFDFKHDFVGYVALILVGISVLFLFIFAFSIKTFNFQKR</sequence>
<reference key="1">
    <citation type="journal article" date="2012" name="Nature">
        <title>A petunia ABC protein controls strigolactone-dependent symbiotic signalling and branching.</title>
        <authorList>
            <person name="Kretzschmar T."/>
            <person name="Kohlen W."/>
            <person name="Sasse J."/>
            <person name="Borghi L."/>
            <person name="Schlegel M."/>
            <person name="Bachelier J.B."/>
            <person name="Reinhardt D."/>
            <person name="Bours R."/>
            <person name="Bouwmeester H.J."/>
            <person name="Martinoia E."/>
        </authorList>
    </citation>
    <scope>NUCLEOTIDE SEQUENCE [MRNA]</scope>
    <scope>FUNCTION</scope>
    <scope>SUBCELLULAR LOCATION</scope>
    <scope>TISSUE SPECIFICITY</scope>
    <scope>INDUCTION</scope>
    <scope>DISRUPTION PHENOTYPE</scope>
    <source>
        <strain>cv. W115</strain>
    </source>
</reference>
<reference key="2">
    <citation type="journal article" date="2015" name="Curr. Biol.">
        <title>Asymmetric localizations of the ABC transporter PaPDR1 trace paths of directional strigolactone transport.</title>
        <authorList>
            <person name="Sasse J."/>
            <person name="Simon S."/>
            <person name="Guebeli C."/>
            <person name="Liu G.W."/>
            <person name="Cheng X."/>
            <person name="Friml J."/>
            <person name="Bouwmeester H."/>
            <person name="Martinoia E."/>
            <person name="Borghi L."/>
        </authorList>
    </citation>
    <scope>FUNCTION</scope>
    <scope>SUBCELLULAR LOCATION</scope>
    <scope>TISSUE SPECIFICITY</scope>
</reference>
<reference key="3">
    <citation type="journal article" date="2016" name="Planta">
        <title>The importance of strigolactone transport regulation for symbiotic signaling and shoot branching.</title>
        <authorList>
            <person name="Borghi L."/>
            <person name="Liu G.W."/>
            <person name="Emonet A."/>
            <person name="Kretzschmar T."/>
            <person name="Martinoia E."/>
        </authorList>
    </citation>
    <scope>FUNCTION</scope>
    <scope>SUBCELLULAR LOCATION</scope>
</reference>
<evidence type="ECO:0000255" key="1"/>
<evidence type="ECO:0000255" key="2">
    <source>
        <dbReference type="PROSITE-ProRule" id="PRU00434"/>
    </source>
</evidence>
<evidence type="ECO:0000256" key="3">
    <source>
        <dbReference type="SAM" id="MobiDB-lite"/>
    </source>
</evidence>
<evidence type="ECO:0000269" key="4">
    <source>
    </source>
</evidence>
<evidence type="ECO:0000269" key="5">
    <source>
    </source>
</evidence>
<evidence type="ECO:0000269" key="6">
    <source>
    </source>
</evidence>
<evidence type="ECO:0000303" key="7">
    <source>
    </source>
</evidence>
<evidence type="ECO:0000305" key="8"/>
<comment type="function">
    <text evidence="4 5 6">Cellular strigolactone (SL) transporter required for the exudation of SL from the root to the soil (PubMed:22398443, PubMed:25683808, PubMed:27040840). The presence of SL in the vicinity of the roots is required for development of symbiotic interactions with arbuscular mycorrhizal fungi (AMF) (PubMed:22398443, PubMed:27040840). Transports SL in the above ground tissues and is required for the control of shoot branching (PubMed:22398443, PubMed:27040840). SL regulates plant shoot architecture by inhibiting the outgrowth of axillary buds (PubMed:22398443, PubMed:27040840). Involved in the regulation of shootward and outward directional strigolactone transport in roots (PubMed:25683808). Due to its polar localization in root cells, mediates directional shootward strigolactone transport, as well as localized outward directional transport for exudation to the soil (PubMed:25683808).</text>
</comment>
<comment type="subcellular location">
    <subcellularLocation>
        <location evidence="4 5 6">Cell membrane</location>
        <topology evidence="1">Multi-pass membrane protein</topology>
    </subcellularLocation>
    <text evidence="4 5 6">Localizes to the plasma membrane (PubMed:22398443, PubMed:25683808, PubMed:27040840). Exhibits asymmetric localization in different root tissues (PubMed:25683808). In root tips, localizes at the apical membrane of hypodermal cells (PubMed:25683808). In the hypodermal passage cells localizes in the outer-lateral membrane (PubMed:25683808).</text>
</comment>
<comment type="tissue specificity">
    <text evidence="4 5">Expressed in root hypodermal passage cells (PubMed:22398443, PubMed:25683808). Expressed in stem tissues, particularly the vasculature and nodes adjacent to leaf axils (PubMed:22398443).</text>
</comment>
<comment type="induction">
    <text evidence="4">Induced in roots by auxin, phosphate starvation, treatment with the synthetic strigolactone analog GR24, and colonization by the arbuscular mycorrhizal fungus Glomus intraradices.</text>
</comment>
<comment type="disruption phenotype">
    <text evidence="4">Enhanced branching phenotype (PubMed:22398443). Defective in strigolactone exudation from roots, and reduced symbiotic interactions with arbuscular mycorrhizal fungi (AMF) (PubMed:22398443).</text>
</comment>
<comment type="similarity">
    <text evidence="8">Belongs to the ABC transporter superfamily. ABCG family. PDR (TC 3.A.1.205) subfamily.</text>
</comment>
<feature type="chain" id="PRO_0000447562" description="Pleiotropic drug resistance protein 1">
    <location>
        <begin position="1"/>
        <end position="1452"/>
    </location>
</feature>
<feature type="transmembrane region" description="Helical" evidence="1">
    <location>
        <begin position="521"/>
        <end position="541"/>
    </location>
</feature>
<feature type="transmembrane region" description="Helical" evidence="1">
    <location>
        <begin position="554"/>
        <end position="574"/>
    </location>
</feature>
<feature type="transmembrane region" description="Helical" evidence="1">
    <location>
        <begin position="609"/>
        <end position="629"/>
    </location>
</feature>
<feature type="transmembrane region" description="Helical" evidence="1">
    <location>
        <begin position="640"/>
        <end position="660"/>
    </location>
</feature>
<feature type="transmembrane region" description="Helical" evidence="1">
    <location>
        <begin position="664"/>
        <end position="684"/>
    </location>
</feature>
<feature type="transmembrane region" description="Helical" evidence="1">
    <location>
        <begin position="694"/>
        <end position="714"/>
    </location>
</feature>
<feature type="transmembrane region" description="Helical" evidence="1">
    <location>
        <begin position="753"/>
        <end position="773"/>
    </location>
</feature>
<feature type="transmembrane region" description="Helical" evidence="1">
    <location>
        <begin position="1199"/>
        <end position="1219"/>
    </location>
</feature>
<feature type="transmembrane region" description="Helical" evidence="1">
    <location>
        <begin position="1239"/>
        <end position="1259"/>
    </location>
</feature>
<feature type="transmembrane region" description="Helical" evidence="1">
    <location>
        <begin position="1287"/>
        <end position="1307"/>
    </location>
</feature>
<feature type="transmembrane region" description="Helical" evidence="1">
    <location>
        <begin position="1314"/>
        <end position="1334"/>
    </location>
</feature>
<feature type="transmembrane region" description="Helical" evidence="1">
    <location>
        <begin position="1344"/>
        <end position="1364"/>
    </location>
</feature>
<feature type="transmembrane region" description="Helical" evidence="1">
    <location>
        <begin position="1375"/>
        <end position="1395"/>
    </location>
</feature>
<feature type="transmembrane region" description="Helical" evidence="1">
    <location>
        <begin position="1421"/>
        <end position="1441"/>
    </location>
</feature>
<feature type="domain" description="ABC transporter 1" evidence="2">
    <location>
        <begin position="152"/>
        <end position="425"/>
    </location>
</feature>
<feature type="domain" description="ABC transmembrane type-2 1" evidence="1">
    <location>
        <begin position="504"/>
        <end position="716"/>
    </location>
</feature>
<feature type="domain" description="ABC transporter 2" evidence="2">
    <location>
        <begin position="855"/>
        <end position="1107"/>
    </location>
</feature>
<feature type="domain" description="ABC transmembrane type-2 2" evidence="1">
    <location>
        <begin position="1180"/>
        <end position="1394"/>
    </location>
</feature>
<feature type="region of interest" description="Disordered" evidence="3">
    <location>
        <begin position="808"/>
        <end position="830"/>
    </location>
</feature>
<feature type="compositionally biased region" description="Basic and acidic residues" evidence="3">
    <location>
        <begin position="812"/>
        <end position="821"/>
    </location>
</feature>
<feature type="binding site" evidence="2">
    <location>
        <begin position="185"/>
        <end position="192"/>
    </location>
    <ligand>
        <name>ATP</name>
        <dbReference type="ChEBI" id="CHEBI:30616"/>
    </ligand>
</feature>
<feature type="binding site" evidence="2">
    <location>
        <begin position="900"/>
        <end position="907"/>
    </location>
    <ligand>
        <name>ATP</name>
        <dbReference type="ChEBI" id="CHEBI:30616"/>
    </ligand>
</feature>
<protein>
    <recommendedName>
        <fullName evidence="7">Pleiotropic drug resistance protein 1</fullName>
    </recommendedName>
    <alternativeName>
        <fullName evidence="8">ABC transporter G family PDR1</fullName>
    </alternativeName>
    <alternativeName>
        <fullName evidence="8">Strigolactone transporter</fullName>
    </alternativeName>
</protein>
<proteinExistence type="evidence at transcript level"/>
<dbReference type="EMBL" id="JQ292813">
    <property type="protein sequence ID" value="AFA43816.1"/>
    <property type="molecule type" value="mRNA"/>
</dbReference>
<dbReference type="SMR" id="H6WS94"/>
<dbReference type="TCDB" id="3.A.1.205.17">
    <property type="family name" value="the atp-binding cassette (abc) superfamily"/>
</dbReference>
<dbReference type="GO" id="GO:0005886">
    <property type="term" value="C:plasma membrane"/>
    <property type="evidence" value="ECO:0000314"/>
    <property type="project" value="UniProtKB"/>
</dbReference>
<dbReference type="GO" id="GO:0140359">
    <property type="term" value="F:ABC-type transporter activity"/>
    <property type="evidence" value="ECO:0007669"/>
    <property type="project" value="InterPro"/>
</dbReference>
<dbReference type="GO" id="GO:0005524">
    <property type="term" value="F:ATP binding"/>
    <property type="evidence" value="ECO:0007669"/>
    <property type="project" value="UniProtKB-KW"/>
</dbReference>
<dbReference type="GO" id="GO:0016887">
    <property type="term" value="F:ATP hydrolysis activity"/>
    <property type="evidence" value="ECO:0007669"/>
    <property type="project" value="InterPro"/>
</dbReference>
<dbReference type="GO" id="GO:0009914">
    <property type="term" value="P:hormone transport"/>
    <property type="evidence" value="ECO:0000315"/>
    <property type="project" value="UniProtKB"/>
</dbReference>
<dbReference type="GO" id="GO:2000032">
    <property type="term" value="P:regulation of secondary shoot formation"/>
    <property type="evidence" value="ECO:0000315"/>
    <property type="project" value="UniProtKB"/>
</dbReference>
<dbReference type="CDD" id="cd03233">
    <property type="entry name" value="ABCG_PDR_domain1"/>
    <property type="match status" value="1"/>
</dbReference>
<dbReference type="CDD" id="cd03232">
    <property type="entry name" value="ABCG_PDR_domain2"/>
    <property type="match status" value="1"/>
</dbReference>
<dbReference type="FunFam" id="3.40.50.300:FF:000179">
    <property type="entry name" value="ABC transporter G family member 34"/>
    <property type="match status" value="1"/>
</dbReference>
<dbReference type="FunFam" id="3.40.50.300:FF:000059">
    <property type="entry name" value="ABC transporter G family member 40"/>
    <property type="match status" value="1"/>
</dbReference>
<dbReference type="Gene3D" id="3.40.50.300">
    <property type="entry name" value="P-loop containing nucleotide triphosphate hydrolases"/>
    <property type="match status" value="2"/>
</dbReference>
<dbReference type="InterPro" id="IPR003593">
    <property type="entry name" value="AAA+_ATPase"/>
</dbReference>
<dbReference type="InterPro" id="IPR013525">
    <property type="entry name" value="ABC2_TM"/>
</dbReference>
<dbReference type="InterPro" id="IPR029481">
    <property type="entry name" value="ABC_trans_N"/>
</dbReference>
<dbReference type="InterPro" id="IPR003439">
    <property type="entry name" value="ABC_transporter-like_ATP-bd"/>
</dbReference>
<dbReference type="InterPro" id="IPR043926">
    <property type="entry name" value="ABCG_dom"/>
</dbReference>
<dbReference type="InterPro" id="IPR034001">
    <property type="entry name" value="ABCG_PDR_1"/>
</dbReference>
<dbReference type="InterPro" id="IPR034003">
    <property type="entry name" value="ABCG_PDR_2"/>
</dbReference>
<dbReference type="InterPro" id="IPR027417">
    <property type="entry name" value="P-loop_NTPase"/>
</dbReference>
<dbReference type="InterPro" id="IPR013581">
    <property type="entry name" value="PDR_assoc"/>
</dbReference>
<dbReference type="PANTHER" id="PTHR48040:SF45">
    <property type="entry name" value="PLEIOTROPIC DRUG RESISTANCE PROTEIN 1-LIKE"/>
    <property type="match status" value="1"/>
</dbReference>
<dbReference type="PANTHER" id="PTHR48040">
    <property type="entry name" value="PLEIOTROPIC DRUG RESISTANCE PROTEIN 1-LIKE ISOFORM X1"/>
    <property type="match status" value="1"/>
</dbReference>
<dbReference type="Pfam" id="PF01061">
    <property type="entry name" value="ABC2_membrane"/>
    <property type="match status" value="2"/>
</dbReference>
<dbReference type="Pfam" id="PF19055">
    <property type="entry name" value="ABC2_membrane_7"/>
    <property type="match status" value="1"/>
</dbReference>
<dbReference type="Pfam" id="PF00005">
    <property type="entry name" value="ABC_tran"/>
    <property type="match status" value="2"/>
</dbReference>
<dbReference type="Pfam" id="PF14510">
    <property type="entry name" value="ABC_trans_N"/>
    <property type="match status" value="1"/>
</dbReference>
<dbReference type="Pfam" id="PF08370">
    <property type="entry name" value="PDR_assoc"/>
    <property type="match status" value="1"/>
</dbReference>
<dbReference type="SMART" id="SM00382">
    <property type="entry name" value="AAA"/>
    <property type="match status" value="2"/>
</dbReference>
<dbReference type="SUPFAM" id="SSF52540">
    <property type="entry name" value="P-loop containing nucleoside triphosphate hydrolases"/>
    <property type="match status" value="2"/>
</dbReference>
<dbReference type="PROSITE" id="PS50893">
    <property type="entry name" value="ABC_TRANSPORTER_2"/>
    <property type="match status" value="2"/>
</dbReference>
<name>PDR1_PETHY</name>
<organism>
    <name type="scientific">Petunia hybrida</name>
    <name type="common">Petunia</name>
    <dbReference type="NCBI Taxonomy" id="4102"/>
    <lineage>
        <taxon>Eukaryota</taxon>
        <taxon>Viridiplantae</taxon>
        <taxon>Streptophyta</taxon>
        <taxon>Embryophyta</taxon>
        <taxon>Tracheophyta</taxon>
        <taxon>Spermatophyta</taxon>
        <taxon>Magnoliopsida</taxon>
        <taxon>eudicotyledons</taxon>
        <taxon>Gunneridae</taxon>
        <taxon>Pentapetalae</taxon>
        <taxon>asterids</taxon>
        <taxon>lamiids</taxon>
        <taxon>Solanales</taxon>
        <taxon>Solanaceae</taxon>
        <taxon>Petunioideae</taxon>
        <taxon>Petunia</taxon>
    </lineage>
</organism>
<keyword id="KW-0067">ATP-binding</keyword>
<keyword id="KW-1003">Cell membrane</keyword>
<keyword id="KW-0472">Membrane</keyword>
<keyword id="KW-0547">Nucleotide-binding</keyword>
<keyword id="KW-0677">Repeat</keyword>
<keyword id="KW-0812">Transmembrane</keyword>
<keyword id="KW-1133">Transmembrane helix</keyword>
<keyword id="KW-0813">Transport</keyword>